<evidence type="ECO:0000250" key="1">
    <source>
        <dbReference type="UniProtKB" id="P0A9J6"/>
    </source>
</evidence>
<evidence type="ECO:0000250" key="2">
    <source>
        <dbReference type="UniProtKB" id="P0AEW9"/>
    </source>
</evidence>
<evidence type="ECO:0000305" key="3"/>
<protein>
    <recommendedName>
        <fullName evidence="2">1-phosphofructokinase</fullName>
        <ecNumber evidence="2">2.7.1.56</ecNumber>
    </recommendedName>
    <alternativeName>
        <fullName evidence="2">Fructose 1-phosphate kinase</fullName>
        <shortName evidence="2">Fru1PK</shortName>
    </alternativeName>
</protein>
<dbReference type="EC" id="2.7.1.56" evidence="2"/>
<dbReference type="EMBL" id="L42023">
    <property type="protein sequence ID" value="AAC22106.1"/>
    <property type="molecule type" value="Genomic_DNA"/>
</dbReference>
<dbReference type="PIR" id="A64069">
    <property type="entry name" value="A64069"/>
</dbReference>
<dbReference type="RefSeq" id="NP_438608.1">
    <property type="nucleotide sequence ID" value="NC_000907.1"/>
</dbReference>
<dbReference type="SMR" id="P44330"/>
<dbReference type="STRING" id="71421.HI_0447"/>
<dbReference type="EnsemblBacteria" id="AAC22106">
    <property type="protein sequence ID" value="AAC22106"/>
    <property type="gene ID" value="HI_0447"/>
</dbReference>
<dbReference type="KEGG" id="hin:HI_0447"/>
<dbReference type="PATRIC" id="fig|71421.8.peg.467"/>
<dbReference type="eggNOG" id="COG1105">
    <property type="taxonomic scope" value="Bacteria"/>
</dbReference>
<dbReference type="HOGENOM" id="CLU_050013_0_1_6"/>
<dbReference type="OrthoDB" id="9801219at2"/>
<dbReference type="PhylomeDB" id="P44330"/>
<dbReference type="BioCyc" id="HINF71421:G1GJ1-463-MONOMER"/>
<dbReference type="Proteomes" id="UP000000579">
    <property type="component" value="Chromosome"/>
</dbReference>
<dbReference type="GO" id="GO:0005829">
    <property type="term" value="C:cytosol"/>
    <property type="evidence" value="ECO:0000318"/>
    <property type="project" value="GO_Central"/>
</dbReference>
<dbReference type="GO" id="GO:0008662">
    <property type="term" value="F:1-phosphofructokinase activity"/>
    <property type="evidence" value="ECO:0007669"/>
    <property type="project" value="UniProtKB-EC"/>
</dbReference>
<dbReference type="GO" id="GO:0005524">
    <property type="term" value="F:ATP binding"/>
    <property type="evidence" value="ECO:0007669"/>
    <property type="project" value="UniProtKB-KW"/>
</dbReference>
<dbReference type="GO" id="GO:0008443">
    <property type="term" value="F:phosphofructokinase activity"/>
    <property type="evidence" value="ECO:0000318"/>
    <property type="project" value="GO_Central"/>
</dbReference>
<dbReference type="CDD" id="cd01164">
    <property type="entry name" value="FruK_PfkB_like"/>
    <property type="match status" value="1"/>
</dbReference>
<dbReference type="FunFam" id="3.40.1190.20:FF:000001">
    <property type="entry name" value="Phosphofructokinase"/>
    <property type="match status" value="1"/>
</dbReference>
<dbReference type="Gene3D" id="3.40.1190.20">
    <property type="match status" value="1"/>
</dbReference>
<dbReference type="InterPro" id="IPR022463">
    <property type="entry name" value="1-PFruKinase"/>
</dbReference>
<dbReference type="InterPro" id="IPR002173">
    <property type="entry name" value="Carboh/pur_kinase_PfkB_CS"/>
</dbReference>
<dbReference type="InterPro" id="IPR011611">
    <property type="entry name" value="PfkB_dom"/>
</dbReference>
<dbReference type="InterPro" id="IPR029056">
    <property type="entry name" value="Ribokinase-like"/>
</dbReference>
<dbReference type="InterPro" id="IPR017583">
    <property type="entry name" value="Tagatose/fructose_Pkinase"/>
</dbReference>
<dbReference type="NCBIfam" id="TIGR03168">
    <property type="entry name" value="1-PFK"/>
    <property type="match status" value="1"/>
</dbReference>
<dbReference type="NCBIfam" id="TIGR03828">
    <property type="entry name" value="pfkB"/>
    <property type="match status" value="1"/>
</dbReference>
<dbReference type="NCBIfam" id="NF007068">
    <property type="entry name" value="PRK09513.1"/>
    <property type="match status" value="1"/>
</dbReference>
<dbReference type="PANTHER" id="PTHR46566:SF5">
    <property type="entry name" value="1-PHOSPHOFRUCTOKINASE"/>
    <property type="match status" value="1"/>
</dbReference>
<dbReference type="PANTHER" id="PTHR46566">
    <property type="entry name" value="1-PHOSPHOFRUCTOKINASE-RELATED"/>
    <property type="match status" value="1"/>
</dbReference>
<dbReference type="Pfam" id="PF00294">
    <property type="entry name" value="PfkB"/>
    <property type="match status" value="1"/>
</dbReference>
<dbReference type="PIRSF" id="PIRSF000535">
    <property type="entry name" value="1PFK/6PFK/LacC"/>
    <property type="match status" value="1"/>
</dbReference>
<dbReference type="SUPFAM" id="SSF53613">
    <property type="entry name" value="Ribokinase-like"/>
    <property type="match status" value="1"/>
</dbReference>
<dbReference type="PROSITE" id="PS00583">
    <property type="entry name" value="PFKB_KINASES_1"/>
    <property type="match status" value="1"/>
</dbReference>
<dbReference type="PROSITE" id="PS00584">
    <property type="entry name" value="PFKB_KINASES_2"/>
    <property type="match status" value="1"/>
</dbReference>
<organism>
    <name type="scientific">Haemophilus influenzae (strain ATCC 51907 / DSM 11121 / KW20 / Rd)</name>
    <dbReference type="NCBI Taxonomy" id="71421"/>
    <lineage>
        <taxon>Bacteria</taxon>
        <taxon>Pseudomonadati</taxon>
        <taxon>Pseudomonadota</taxon>
        <taxon>Gammaproteobacteria</taxon>
        <taxon>Pasteurellales</taxon>
        <taxon>Pasteurellaceae</taxon>
        <taxon>Haemophilus</taxon>
    </lineage>
</organism>
<sequence length="313" mass="33522">MASVVTITLNAAYDLVGRLNRIQLGEVNTVETLGLFPAGKGINVAKVLKDLGVNVAVGGFLGKDNSADFEQMFNQHGLEDKFHRVDGKTRINVKITETEADVTDLNFLGYQISPQVWQQFVTDSLAYCLNYDIVAVCGSLPRGVSPELFADWLNQLHQAGVKVVLDSSNAALTAGLKAKPWLVKPNHRELEAWVGHPLNSLEEIIAAAQQLKAEGIENVIISMGAKGSLWINNEGVLKAEPAQCENVVSTVGAGDSMVAGLIYGFEKGLSKTETLAFATAVSAFAVSQSNVGVSDLSLLDPILEKVQITMIEG</sequence>
<gene>
    <name type="primary">fruK</name>
    <name type="ordered locus">HI_0447</name>
</gene>
<keyword id="KW-0067">ATP-binding</keyword>
<keyword id="KW-0418">Kinase</keyword>
<keyword id="KW-0547">Nucleotide-binding</keyword>
<keyword id="KW-1185">Reference proteome</keyword>
<keyword id="KW-0808">Transferase</keyword>
<accession>P44330</accession>
<reference key="1">
    <citation type="journal article" date="1995" name="Science">
        <title>Whole-genome random sequencing and assembly of Haemophilus influenzae Rd.</title>
        <authorList>
            <person name="Fleischmann R.D."/>
            <person name="Adams M.D."/>
            <person name="White O."/>
            <person name="Clayton R.A."/>
            <person name="Kirkness E.F."/>
            <person name="Kerlavage A.R."/>
            <person name="Bult C.J."/>
            <person name="Tomb J.-F."/>
            <person name="Dougherty B.A."/>
            <person name="Merrick J.M."/>
            <person name="McKenney K."/>
            <person name="Sutton G.G."/>
            <person name="FitzHugh W."/>
            <person name="Fields C.A."/>
            <person name="Gocayne J.D."/>
            <person name="Scott J.D."/>
            <person name="Shirley R."/>
            <person name="Liu L.-I."/>
            <person name="Glodek A."/>
            <person name="Kelley J.M."/>
            <person name="Weidman J.F."/>
            <person name="Phillips C.A."/>
            <person name="Spriggs T."/>
            <person name="Hedblom E."/>
            <person name="Cotton M.D."/>
            <person name="Utterback T.R."/>
            <person name="Hanna M.C."/>
            <person name="Nguyen D.T."/>
            <person name="Saudek D.M."/>
            <person name="Brandon R.C."/>
            <person name="Fine L.D."/>
            <person name="Fritchman J.L."/>
            <person name="Fuhrmann J.L."/>
            <person name="Geoghagen N.S.M."/>
            <person name="Gnehm C.L."/>
            <person name="McDonald L.A."/>
            <person name="Small K.V."/>
            <person name="Fraser C.M."/>
            <person name="Smith H.O."/>
            <person name="Venter J.C."/>
        </authorList>
    </citation>
    <scope>NUCLEOTIDE SEQUENCE [LARGE SCALE GENOMIC DNA]</scope>
    <source>
        <strain>ATCC 51907 / DSM 11121 / KW20 / Rd</strain>
    </source>
</reference>
<name>K1PF_HAEIN</name>
<comment type="function">
    <text evidence="2">Catalyzes the ATP-dependent phosphorylation of fructose-l-phosphate to fructose-l,6-bisphosphate.</text>
</comment>
<comment type="catalytic activity">
    <reaction evidence="2">
        <text>beta-D-fructose 1-phosphate + ATP = beta-D-fructose 1,6-bisphosphate + ADP + H(+)</text>
        <dbReference type="Rhea" id="RHEA:14213"/>
        <dbReference type="ChEBI" id="CHEBI:15378"/>
        <dbReference type="ChEBI" id="CHEBI:30616"/>
        <dbReference type="ChEBI" id="CHEBI:32966"/>
        <dbReference type="ChEBI" id="CHEBI:138881"/>
        <dbReference type="ChEBI" id="CHEBI:456216"/>
        <dbReference type="EC" id="2.7.1.56"/>
    </reaction>
</comment>
<comment type="similarity">
    <text evidence="3">Belongs to the carbohydrate kinase PfkB family.</text>
</comment>
<feature type="chain" id="PRO_0000080079" description="1-phosphofructokinase">
    <location>
        <begin position="1"/>
        <end position="313"/>
    </location>
</feature>
<feature type="active site" description="Proton acceptor" evidence="1">
    <location>
        <position position="255"/>
    </location>
</feature>
<feature type="binding site" evidence="1">
    <location>
        <begin position="222"/>
        <end position="227"/>
    </location>
    <ligand>
        <name>ATP</name>
        <dbReference type="ChEBI" id="CHEBI:30616"/>
    </ligand>
</feature>
<feature type="binding site" evidence="1">
    <location>
        <begin position="254"/>
        <end position="255"/>
    </location>
    <ligand>
        <name>ATP</name>
        <dbReference type="ChEBI" id="CHEBI:30616"/>
    </ligand>
</feature>
<proteinExistence type="inferred from homology"/>